<evidence type="ECO:0000255" key="1">
    <source>
        <dbReference type="PROSITE-ProRule" id="PRU00042"/>
    </source>
</evidence>
<evidence type="ECO:0000269" key="2">
    <source>
    </source>
</evidence>
<evidence type="ECO:0000269" key="3">
    <source>
    </source>
</evidence>
<evidence type="ECO:0000269" key="4">
    <source>
    </source>
</evidence>
<evidence type="ECO:0000303" key="5">
    <source>
    </source>
</evidence>
<evidence type="ECO:0000303" key="6">
    <source>
    </source>
</evidence>
<evidence type="ECO:0000305" key="7"/>
<evidence type="ECO:0000305" key="8">
    <source>
    </source>
</evidence>
<keyword id="KW-0479">Metal-binding</keyword>
<keyword id="KW-0539">Nucleus</keyword>
<keyword id="KW-0862">Zinc</keyword>
<keyword id="KW-0863">Zinc-finger</keyword>
<gene>
    <name evidence="6" type="primary">TRI6</name>
</gene>
<comment type="function">
    <text evidence="2 3 4 8">Transcriptional activator of part of the core trichothecene biosynthesis cluster (PubMed:11352533, PubMed:12732543, PubMed:16347944, PubMed:7646028).</text>
</comment>
<comment type="subcellular location">
    <subcellularLocation>
        <location evidence="7">Nucleus</location>
    </subcellularLocation>
</comment>
<comment type="disruption phenotype">
    <text evidence="4">Reduces transcription of TRI4 and TRI5 and does not produce trichothecenes but accumulates low levels of the trichothecene precursor trichodiene (PubMed:7646028).</text>
</comment>
<sequence length="217" mass="25345">MIYMASGTHYESWSALPLFDRVASPDHAKDFVPDLNDYESPTFEVDLLSENYDYDNFLTYSLPTVDPTKTLLHEEPLCFEGDFTNPAIDHYITTSSGLLDAVPSQLIALPSFTQPSKCPFPNCKSTTIFESGRDFRRHYRQHFKRFFCRYPDCSQSTQDIMEVGTKGFATRKDRARHESKHKPTVRCPWHDQEGQQCLRVFSRVDNMRDHYRRIHKC</sequence>
<accession>Q00856</accession>
<organism>
    <name type="scientific">Fusarium sporotrichioides</name>
    <dbReference type="NCBI Taxonomy" id="5514"/>
    <lineage>
        <taxon>Eukaryota</taxon>
        <taxon>Fungi</taxon>
        <taxon>Dikarya</taxon>
        <taxon>Ascomycota</taxon>
        <taxon>Pezizomycotina</taxon>
        <taxon>Sordariomycetes</taxon>
        <taxon>Hypocreomycetidae</taxon>
        <taxon>Hypocreales</taxon>
        <taxon>Nectriaceae</taxon>
        <taxon>Fusarium</taxon>
    </lineage>
</organism>
<feature type="chain" id="PRO_0000442369" description="Trichothecene biosynthesis transcription regulator TRI6">
    <location>
        <begin position="1"/>
        <end position="217"/>
    </location>
</feature>
<feature type="zinc finger region" description="C2H2-type" evidence="1">
    <location>
        <begin position="185"/>
        <end position="215"/>
    </location>
</feature>
<name>TRI6_FUSSP</name>
<reference key="1">
    <citation type="journal article" date="1995" name="Appl. Environ. Microbiol.">
        <title>Tri6 encodes an unusual zinc finger protein involved in regulation of trichothecene biosynthesis in Fusarium sporotrichioides.</title>
        <authorList>
            <person name="Proctor R.H."/>
            <person name="Hohn T.M."/>
            <person name="McCormick S.P."/>
            <person name="Desjardins A.E."/>
        </authorList>
    </citation>
    <scope>NUCLEOTIDE SEQUENCE [GENOMIC DNA]</scope>
    <scope>FUNCTION</scope>
    <scope>DISRUPTION PHENOTYPE</scope>
    <source>
        <strain>ATCC 24631 / NRRL 3299</strain>
    </source>
</reference>
<reference key="2">
    <citation type="journal article" date="2001" name="Fungal Genet. Biol.">
        <title>A genetic and biochemical approach to study trichothecene diversity in Fusarium sporotrichioides and Fusarium graminearum.</title>
        <authorList>
            <person name="Brown D.W."/>
            <person name="McCormick S.P."/>
            <person name="Alexander N.J."/>
            <person name="Proctor R.H."/>
            <person name="Desjardins A.E."/>
        </authorList>
    </citation>
    <scope>NUCLEOTIDE SEQUENCE [GENOMIC DNA]</scope>
    <scope>FUNCTION</scope>
    <source>
        <strain>ATCC 24631 / NRRL 3299</strain>
    </source>
</reference>
<reference key="3">
    <citation type="journal article" date="1989" name="Appl. Environ. Microbiol.">
        <title>Regulation of trichodiene synthase in Fusarium sporotrichioides and Gibberella pulicaris (Fusarium sambucinum).</title>
        <authorList>
            <person name="Hohn T.M."/>
            <person name="Beremand M.N."/>
        </authorList>
    </citation>
    <scope>FUNCTION</scope>
</reference>
<reference key="4">
    <citation type="journal article" date="2003" name="Appl. Environ. Microbiol.">
        <title>Identification of new genes positively regulated by Tri10 and a regulatory network for trichothecene mycotoxin production.</title>
        <authorList>
            <person name="Peplow A.W."/>
            <person name="Tag A.G."/>
            <person name="Garifullina G.F."/>
            <person name="Beremand M.N."/>
        </authorList>
    </citation>
    <scope>FUNCTION</scope>
    <source>
        <strain>ATCC 24631 / NRRL 3299</strain>
    </source>
</reference>
<dbReference type="EMBL" id="U22150">
    <property type="protein sequence ID" value="AAD11963.1"/>
    <property type="molecule type" value="Genomic_DNA"/>
</dbReference>
<dbReference type="EMBL" id="AF359360">
    <property type="protein sequence ID" value="AAK33075.1"/>
    <property type="molecule type" value="Genomic_DNA"/>
</dbReference>
<dbReference type="GO" id="GO:0005634">
    <property type="term" value="C:nucleus"/>
    <property type="evidence" value="ECO:0007669"/>
    <property type="project" value="UniProtKB-SubCell"/>
</dbReference>
<dbReference type="GO" id="GO:0003676">
    <property type="term" value="F:nucleic acid binding"/>
    <property type="evidence" value="ECO:0007669"/>
    <property type="project" value="InterPro"/>
</dbReference>
<dbReference type="GO" id="GO:0008270">
    <property type="term" value="F:zinc ion binding"/>
    <property type="evidence" value="ECO:0007669"/>
    <property type="project" value="UniProtKB-KW"/>
</dbReference>
<dbReference type="GO" id="GO:0006355">
    <property type="term" value="P:regulation of DNA-templated transcription"/>
    <property type="evidence" value="ECO:0007669"/>
    <property type="project" value="InterPro"/>
</dbReference>
<dbReference type="InterPro" id="IPR016766">
    <property type="entry name" value="Tscrpt_reg_Tri6"/>
</dbReference>
<dbReference type="InterPro" id="IPR013087">
    <property type="entry name" value="Znf_C2H2_type"/>
</dbReference>
<dbReference type="PIRSF" id="PIRSF019847">
    <property type="entry name" value="Trans_reg_Tri6"/>
    <property type="match status" value="1"/>
</dbReference>
<dbReference type="SMART" id="SM00355">
    <property type="entry name" value="ZnF_C2H2"/>
    <property type="match status" value="3"/>
</dbReference>
<protein>
    <recommendedName>
        <fullName evidence="6">Trichothecene biosynthesis transcription regulator TRI6</fullName>
    </recommendedName>
    <alternativeName>
        <fullName evidence="5">Core trichothecene cluster (CTC) protein 6</fullName>
    </alternativeName>
</protein>
<proteinExistence type="predicted"/>